<comment type="function">
    <text evidence="2 10 11">Metalloprotease (By similarity). Plays an essential role in molting, a process during larval stages in which a new cuticle is formed and the old cuticle is shed (PubMed:15255192). Required during ecdysis, the opening of the cuticle to allow the worm to escape (PubMed:15539494).</text>
</comment>
<comment type="cofactor">
    <cofactor evidence="8">
        <name>Zn(2+)</name>
        <dbReference type="ChEBI" id="CHEBI:29105"/>
    </cofactor>
    <text evidence="8">Binds 1 zinc ion per subunit.</text>
</comment>
<comment type="subcellular location">
    <subcellularLocation>
        <location evidence="11">Secreted</location>
    </subcellularLocation>
</comment>
<comment type="alternative products">
    <event type="alternative splicing"/>
    <isoform>
        <id>Q93243-1</id>
        <name>a</name>
        <sequence type="displayed"/>
    </isoform>
    <isoform>
        <id>Q93243-2</id>
        <name>b</name>
        <sequence type="described" ref="VSP_014343"/>
    </isoform>
</comment>
<comment type="tissue specificity">
    <text evidence="10 11">Expressed in hypodermal cells. Not expressed in the seam cells in L1 to L3 larvae, but it is present in seam cells of L4 larvae. Also expressed in attachment points of the cuticle at the anterior end of larvae, in the arcade cells in the mouth, the anterior pharynx, the amphid socket cells, and in the rectal epithelial cells at the posterior end of the larvae (at protein level).</text>
</comment>
<comment type="developmental stage">
    <text>Present in hypodermal cells of the anterior cuticle 4 hours before each molt and is shed in the cuticle after ecdysis.</text>
</comment>
<comment type="disruption phenotype">
    <text evidence="11">Worms exhibit incomplete ecdysis; at each molt the cuticle fails to open sufficiently at the anterior end and the partially shed cuticle is dragged behind the animal.</text>
</comment>
<protein>
    <recommendedName>
        <fullName>Zinc metalloproteinase nas-37</fullName>
        <ecNumber evidence="2">3.4.24.-</ecNumber>
    </recommendedName>
    <alternativeName>
        <fullName>Nematode astacin 37</fullName>
    </alternativeName>
</protein>
<gene>
    <name type="primary">nas-37</name>
    <name type="ORF">C17G1.6</name>
</gene>
<accession>Q93243</accession>
<accession>Q5CZ39</accession>
<dbReference type="EC" id="3.4.24.-" evidence="2"/>
<dbReference type="EMBL" id="AY912076">
    <property type="protein sequence ID" value="AAX81408.1"/>
    <property type="molecule type" value="mRNA"/>
</dbReference>
<dbReference type="EMBL" id="Z78415">
    <property type="protein sequence ID" value="CAB01675.2"/>
    <property type="molecule type" value="Genomic_DNA"/>
</dbReference>
<dbReference type="EMBL" id="Z78415">
    <property type="protein sequence ID" value="CAI58633.1"/>
    <property type="molecule type" value="Genomic_DNA"/>
</dbReference>
<dbReference type="PIR" id="T19366">
    <property type="entry name" value="T19366"/>
</dbReference>
<dbReference type="RefSeq" id="NP_001024413.1">
    <molecule id="Q93243-1"/>
    <property type="nucleotide sequence ID" value="NM_001029242.7"/>
</dbReference>
<dbReference type="RefSeq" id="NP_001024414.1">
    <molecule id="Q93243-2"/>
    <property type="nucleotide sequence ID" value="NM_001029243.7"/>
</dbReference>
<dbReference type="SMR" id="Q93243"/>
<dbReference type="FunCoup" id="Q93243">
    <property type="interactions" value="8"/>
</dbReference>
<dbReference type="STRING" id="6239.C17G1.6a.1"/>
<dbReference type="MEROPS" id="M12.318"/>
<dbReference type="GlyCosmos" id="Q93243">
    <property type="glycosylation" value="1 site, No reported glycans"/>
</dbReference>
<dbReference type="PaxDb" id="6239-C17G1.6a"/>
<dbReference type="PeptideAtlas" id="Q93243"/>
<dbReference type="EnsemblMetazoa" id="C17G1.6a.1">
    <molecule id="Q93243-1"/>
    <property type="protein sequence ID" value="C17G1.6a.1"/>
    <property type="gene ID" value="WBGene00003553"/>
</dbReference>
<dbReference type="EnsemblMetazoa" id="C17G1.6b.1">
    <molecule id="Q93243-2"/>
    <property type="protein sequence ID" value="C17G1.6b.1"/>
    <property type="gene ID" value="WBGene00003553"/>
</dbReference>
<dbReference type="GeneID" id="181208"/>
<dbReference type="KEGG" id="cel:CELE_C17G1.6"/>
<dbReference type="UCSC" id="C17G1.6b">
    <molecule id="Q93243-1"/>
    <property type="organism name" value="c. elegans"/>
</dbReference>
<dbReference type="AGR" id="WB:WBGene00003553"/>
<dbReference type="CTD" id="181208"/>
<dbReference type="WormBase" id="C17G1.6a">
    <molecule id="Q93243-1"/>
    <property type="protein sequence ID" value="CE31417"/>
    <property type="gene ID" value="WBGene00003553"/>
    <property type="gene designation" value="nas-37"/>
</dbReference>
<dbReference type="WormBase" id="C17G1.6b">
    <molecule id="Q93243-2"/>
    <property type="protein sequence ID" value="CE38034"/>
    <property type="gene ID" value="WBGene00003553"/>
    <property type="gene designation" value="nas-37"/>
</dbReference>
<dbReference type="eggNOG" id="KOG3714">
    <property type="taxonomic scope" value="Eukaryota"/>
</dbReference>
<dbReference type="GeneTree" id="ENSGT00970000196453"/>
<dbReference type="InParanoid" id="Q93243"/>
<dbReference type="OMA" id="NGCWSNV"/>
<dbReference type="OrthoDB" id="431034at2759"/>
<dbReference type="PhylomeDB" id="Q93243"/>
<dbReference type="PRO" id="PR:Q93243"/>
<dbReference type="Proteomes" id="UP000001940">
    <property type="component" value="Chromosome X"/>
</dbReference>
<dbReference type="Bgee" id="WBGene00003553">
    <property type="expression patterns" value="Expressed in adult organism and 1 other cell type or tissue"/>
</dbReference>
<dbReference type="GO" id="GO:0005576">
    <property type="term" value="C:extracellular region"/>
    <property type="evidence" value="ECO:0000314"/>
    <property type="project" value="WormBase"/>
</dbReference>
<dbReference type="GO" id="GO:0004222">
    <property type="term" value="F:metalloendopeptidase activity"/>
    <property type="evidence" value="ECO:0000314"/>
    <property type="project" value="WormBase"/>
</dbReference>
<dbReference type="GO" id="GO:0008270">
    <property type="term" value="F:zinc ion binding"/>
    <property type="evidence" value="ECO:0007669"/>
    <property type="project" value="InterPro"/>
</dbReference>
<dbReference type="GO" id="GO:0040002">
    <property type="term" value="P:collagen and cuticulin-based cuticle development"/>
    <property type="evidence" value="ECO:0000315"/>
    <property type="project" value="WormBase"/>
</dbReference>
<dbReference type="GO" id="GO:0042395">
    <property type="term" value="P:ecdysis, collagen and cuticulin-based cuticle"/>
    <property type="evidence" value="ECO:0000315"/>
    <property type="project" value="WormBase"/>
</dbReference>
<dbReference type="GO" id="GO:0018996">
    <property type="term" value="P:molting cycle, collagen and cuticulin-based cuticle"/>
    <property type="evidence" value="ECO:0000315"/>
    <property type="project" value="WormBase"/>
</dbReference>
<dbReference type="GO" id="GO:0006508">
    <property type="term" value="P:proteolysis"/>
    <property type="evidence" value="ECO:0007669"/>
    <property type="project" value="UniProtKB-KW"/>
</dbReference>
<dbReference type="CDD" id="cd00041">
    <property type="entry name" value="CUB"/>
    <property type="match status" value="1"/>
</dbReference>
<dbReference type="CDD" id="cd04280">
    <property type="entry name" value="ZnMc_astacin_like"/>
    <property type="match status" value="1"/>
</dbReference>
<dbReference type="FunFam" id="2.60.120.290:FF:000079">
    <property type="entry name" value="Zinc metalloproteinase"/>
    <property type="match status" value="1"/>
</dbReference>
<dbReference type="FunFam" id="3.40.390.10:FF:000028">
    <property type="entry name" value="Zinc metalloproteinase"/>
    <property type="match status" value="1"/>
</dbReference>
<dbReference type="Gene3D" id="3.40.390.10">
    <property type="entry name" value="Collagenase (Catalytic Domain)"/>
    <property type="match status" value="1"/>
</dbReference>
<dbReference type="Gene3D" id="2.60.120.290">
    <property type="entry name" value="Spermadhesin, CUB domain"/>
    <property type="match status" value="1"/>
</dbReference>
<dbReference type="Gene3D" id="2.20.100.10">
    <property type="entry name" value="Thrombospondin type-1 (TSP1) repeat"/>
    <property type="match status" value="1"/>
</dbReference>
<dbReference type="InterPro" id="IPR034035">
    <property type="entry name" value="Astacin-like_dom"/>
</dbReference>
<dbReference type="InterPro" id="IPR000859">
    <property type="entry name" value="CUB_dom"/>
</dbReference>
<dbReference type="InterPro" id="IPR000742">
    <property type="entry name" value="EGF-like_dom"/>
</dbReference>
<dbReference type="InterPro" id="IPR024079">
    <property type="entry name" value="MetalloPept_cat_dom_sf"/>
</dbReference>
<dbReference type="InterPro" id="IPR017050">
    <property type="entry name" value="Metallopeptidase_nem"/>
</dbReference>
<dbReference type="InterPro" id="IPR001506">
    <property type="entry name" value="Peptidase_M12A"/>
</dbReference>
<dbReference type="InterPro" id="IPR006026">
    <property type="entry name" value="Peptidase_Metallo"/>
</dbReference>
<dbReference type="InterPro" id="IPR035914">
    <property type="entry name" value="Sperma_CUB_dom_sf"/>
</dbReference>
<dbReference type="InterPro" id="IPR000884">
    <property type="entry name" value="TSP1_rpt"/>
</dbReference>
<dbReference type="InterPro" id="IPR036383">
    <property type="entry name" value="TSP1_rpt_sf"/>
</dbReference>
<dbReference type="PANTHER" id="PTHR10127">
    <property type="entry name" value="DISCOIDIN, CUB, EGF, LAMININ , AND ZINC METALLOPROTEASE DOMAIN CONTAINING"/>
    <property type="match status" value="1"/>
</dbReference>
<dbReference type="PANTHER" id="PTHR10127:SF831">
    <property type="entry name" value="ZINC METALLOPROTEINASE NAS-37"/>
    <property type="match status" value="1"/>
</dbReference>
<dbReference type="Pfam" id="PF01400">
    <property type="entry name" value="Astacin"/>
    <property type="match status" value="1"/>
</dbReference>
<dbReference type="Pfam" id="PF00090">
    <property type="entry name" value="TSP_1"/>
    <property type="match status" value="1"/>
</dbReference>
<dbReference type="PIRSF" id="PIRSF036365">
    <property type="entry name" value="Astacin_nematoda"/>
    <property type="match status" value="1"/>
</dbReference>
<dbReference type="PRINTS" id="PR00480">
    <property type="entry name" value="ASTACIN"/>
</dbReference>
<dbReference type="SMART" id="SM00042">
    <property type="entry name" value="CUB"/>
    <property type="match status" value="1"/>
</dbReference>
<dbReference type="SMART" id="SM00209">
    <property type="entry name" value="TSP1"/>
    <property type="match status" value="1"/>
</dbReference>
<dbReference type="SMART" id="SM00235">
    <property type="entry name" value="ZnMc"/>
    <property type="match status" value="1"/>
</dbReference>
<dbReference type="SUPFAM" id="SSF55486">
    <property type="entry name" value="Metalloproteases ('zincins'), catalytic domain"/>
    <property type="match status" value="1"/>
</dbReference>
<dbReference type="SUPFAM" id="SSF49854">
    <property type="entry name" value="Spermadhesin, CUB domain"/>
    <property type="match status" value="1"/>
</dbReference>
<dbReference type="SUPFAM" id="SSF82895">
    <property type="entry name" value="TSP-1 type 1 repeat"/>
    <property type="match status" value="1"/>
</dbReference>
<dbReference type="PROSITE" id="PS51864">
    <property type="entry name" value="ASTACIN"/>
    <property type="match status" value="1"/>
</dbReference>
<dbReference type="PROSITE" id="PS01180">
    <property type="entry name" value="CUB"/>
    <property type="match status" value="1"/>
</dbReference>
<dbReference type="PROSITE" id="PS00022">
    <property type="entry name" value="EGF_1"/>
    <property type="match status" value="1"/>
</dbReference>
<dbReference type="PROSITE" id="PS01186">
    <property type="entry name" value="EGF_2"/>
    <property type="match status" value="1"/>
</dbReference>
<dbReference type="PROSITE" id="PS50026">
    <property type="entry name" value="EGF_3"/>
    <property type="match status" value="1"/>
</dbReference>
<dbReference type="PROSITE" id="PS50092">
    <property type="entry name" value="TSP1"/>
    <property type="match status" value="1"/>
</dbReference>
<keyword id="KW-0025">Alternative splicing</keyword>
<keyword id="KW-0165">Cleavage on pair of basic residues</keyword>
<keyword id="KW-0217">Developmental protein</keyword>
<keyword id="KW-1015">Disulfide bond</keyword>
<keyword id="KW-0245">EGF-like domain</keyword>
<keyword id="KW-0325">Glycoprotein</keyword>
<keyword id="KW-0378">Hydrolase</keyword>
<keyword id="KW-0479">Metal-binding</keyword>
<keyword id="KW-0482">Metalloprotease</keyword>
<keyword id="KW-0645">Protease</keyword>
<keyword id="KW-1185">Reference proteome</keyword>
<keyword id="KW-0964">Secreted</keyword>
<keyword id="KW-0732">Signal</keyword>
<keyword id="KW-0862">Zinc</keyword>
<keyword id="KW-0865">Zymogen</keyword>
<proteinExistence type="evidence at protein level"/>
<evidence type="ECO:0000250" key="1"/>
<evidence type="ECO:0000250" key="2">
    <source>
        <dbReference type="UniProtKB" id="A8Q2D1"/>
    </source>
</evidence>
<evidence type="ECO:0000250" key="3">
    <source>
        <dbReference type="UniProtKB" id="P13497"/>
    </source>
</evidence>
<evidence type="ECO:0000255" key="4"/>
<evidence type="ECO:0000255" key="5">
    <source>
        <dbReference type="PROSITE-ProRule" id="PRU00059"/>
    </source>
</evidence>
<evidence type="ECO:0000255" key="6">
    <source>
        <dbReference type="PROSITE-ProRule" id="PRU00076"/>
    </source>
</evidence>
<evidence type="ECO:0000255" key="7">
    <source>
        <dbReference type="PROSITE-ProRule" id="PRU00210"/>
    </source>
</evidence>
<evidence type="ECO:0000255" key="8">
    <source>
        <dbReference type="PROSITE-ProRule" id="PRU01211"/>
    </source>
</evidence>
<evidence type="ECO:0000256" key="9">
    <source>
        <dbReference type="SAM" id="MobiDB-lite"/>
    </source>
</evidence>
<evidence type="ECO:0000269" key="10">
    <source>
    </source>
</evidence>
<evidence type="ECO:0000269" key="11">
    <source>
    </source>
</evidence>
<evidence type="ECO:0000303" key="12">
    <source>
    </source>
</evidence>
<organism>
    <name type="scientific">Caenorhabditis elegans</name>
    <dbReference type="NCBI Taxonomy" id="6239"/>
    <lineage>
        <taxon>Eukaryota</taxon>
        <taxon>Metazoa</taxon>
        <taxon>Ecdysozoa</taxon>
        <taxon>Nematoda</taxon>
        <taxon>Chromadorea</taxon>
        <taxon>Rhabditida</taxon>
        <taxon>Rhabditina</taxon>
        <taxon>Rhabditomorpha</taxon>
        <taxon>Rhabditoidea</taxon>
        <taxon>Rhabditidae</taxon>
        <taxon>Peloderinae</taxon>
        <taxon>Caenorhabditis</taxon>
    </lineage>
</organism>
<name>NAS37_CAEEL</name>
<feature type="signal peptide" evidence="4">
    <location>
        <begin position="1"/>
        <end position="22"/>
    </location>
</feature>
<feature type="propeptide" id="PRO_0000442683" evidence="3">
    <location>
        <begin position="23"/>
        <end position="114"/>
    </location>
</feature>
<feature type="chain" id="PRO_0000028941" description="Zinc metalloproteinase nas-37">
    <location>
        <begin position="115"/>
        <end position="765"/>
    </location>
</feature>
<feature type="domain" description="Peptidase M12A" evidence="8">
    <location>
        <begin position="115"/>
        <end position="308"/>
    </location>
</feature>
<feature type="domain" description="EGF-like" evidence="6">
    <location>
        <begin position="303"/>
        <end position="343"/>
    </location>
</feature>
<feature type="domain" description="CUB" evidence="5">
    <location>
        <begin position="350"/>
        <end position="458"/>
    </location>
</feature>
<feature type="domain" description="TSP type-1" evidence="7">
    <location>
        <begin position="576"/>
        <end position="627"/>
    </location>
</feature>
<feature type="region of interest" description="Disordered" evidence="9">
    <location>
        <begin position="513"/>
        <end position="573"/>
    </location>
</feature>
<feature type="compositionally biased region" description="Low complexity" evidence="9">
    <location>
        <begin position="526"/>
        <end position="545"/>
    </location>
</feature>
<feature type="compositionally biased region" description="Low complexity" evidence="9">
    <location>
        <begin position="562"/>
        <end position="573"/>
    </location>
</feature>
<feature type="active site" evidence="8">
    <location>
        <position position="205"/>
    </location>
</feature>
<feature type="binding site" evidence="8">
    <location>
        <position position="204"/>
    </location>
    <ligand>
        <name>Zn(2+)</name>
        <dbReference type="ChEBI" id="CHEBI:29105"/>
        <note>catalytic</note>
    </ligand>
</feature>
<feature type="binding site" evidence="8">
    <location>
        <position position="208"/>
    </location>
    <ligand>
        <name>Zn(2+)</name>
        <dbReference type="ChEBI" id="CHEBI:29105"/>
        <note>catalytic</note>
    </ligand>
</feature>
<feature type="binding site" evidence="8">
    <location>
        <position position="214"/>
    </location>
    <ligand>
        <name>Zn(2+)</name>
        <dbReference type="ChEBI" id="CHEBI:29105"/>
        <note>catalytic</note>
    </ligand>
</feature>
<feature type="glycosylation site" description="N-linked (GlcNAc...) asparagine" evidence="4">
    <location>
        <position position="126"/>
    </location>
</feature>
<feature type="disulfide bond" evidence="8">
    <location>
        <begin position="156"/>
        <end position="307"/>
    </location>
</feature>
<feature type="disulfide bond" evidence="8">
    <location>
        <begin position="177"/>
        <end position="196"/>
    </location>
</feature>
<feature type="disulfide bond" evidence="1">
    <location>
        <begin position="311"/>
        <end position="331"/>
    </location>
</feature>
<feature type="disulfide bond" evidence="1">
    <location>
        <begin position="333"/>
        <end position="342"/>
    </location>
</feature>
<feature type="disulfide bond" evidence="1">
    <location>
        <begin position="350"/>
        <end position="374"/>
    </location>
</feature>
<feature type="disulfide bond" evidence="1">
    <location>
        <begin position="400"/>
        <end position="420"/>
    </location>
</feature>
<feature type="disulfide bond" evidence="1">
    <location>
        <begin position="588"/>
        <end position="621"/>
    </location>
</feature>
<feature type="disulfide bond" evidence="1">
    <location>
        <begin position="592"/>
        <end position="626"/>
    </location>
</feature>
<feature type="disulfide bond" evidence="1">
    <location>
        <begin position="604"/>
        <end position="611"/>
    </location>
</feature>
<feature type="splice variant" id="VSP_014343" description="In isoform b." evidence="12">
    <location>
        <begin position="484"/>
        <end position="563"/>
    </location>
</feature>
<feature type="mutagenesis site" description="In ox196; induces defects in protease involved in ecdysis." evidence="11">
    <original>H</original>
    <variation>R</variation>
    <location>
        <position position="214"/>
    </location>
</feature>
<reference key="1">
    <citation type="journal article" date="2004" name="Development">
        <title>A conserved metalloprotease mediates ecdysis in Caenorhabditis elegans.</title>
        <authorList>
            <person name="Davis M.W."/>
            <person name="Birnie A.J."/>
            <person name="Chan A.C."/>
            <person name="Page A.P."/>
            <person name="Jorgensen E.M."/>
        </authorList>
    </citation>
    <scope>NUCLEOTIDE SEQUENCE [MRNA] (ISOFORM B)</scope>
    <scope>FUNCTION</scope>
    <scope>SUBCELLULAR LOCATION</scope>
    <scope>TISSUE SPECIFICITY</scope>
    <scope>MUTAGENESIS OF HIS-214</scope>
    <scope>DISRUPTION PHENOTYPE</scope>
</reference>
<reference key="2">
    <citation type="journal article" date="1998" name="Science">
        <title>Genome sequence of the nematode C. elegans: a platform for investigating biology.</title>
        <authorList>
            <consortium name="The C. elegans sequencing consortium"/>
        </authorList>
    </citation>
    <scope>NUCLEOTIDE SEQUENCE [LARGE SCALE GENOMIC DNA]</scope>
    <scope>ALTERNATIVE SPLICING</scope>
    <source>
        <strain>Bristol N2</strain>
    </source>
</reference>
<reference key="3">
    <citation type="journal article" date="2003" name="Eur. J. Biochem.">
        <title>The astacin protein family in Caenorhabditis elegans.</title>
        <authorList>
            <person name="Moehrlen F."/>
            <person name="Hutter H."/>
            <person name="Zwilling R."/>
        </authorList>
    </citation>
    <scope>IDENTIFICATION</scope>
    <scope>NOMENCLATURE</scope>
</reference>
<reference key="4">
    <citation type="journal article" date="2004" name="Biol. Chem.">
        <title>Metalloproteases with EGF, CUB, and thrombospondin-1 domains function in molting of Caenorhabditis elegans.</title>
        <authorList>
            <person name="Suzuki M."/>
            <person name="Sagoh N."/>
            <person name="Iwasaki H."/>
            <person name="Inoue H."/>
            <person name="Takahashi K."/>
        </authorList>
    </citation>
    <scope>FUNCTION</scope>
    <scope>TISSUE SPECIFICITY</scope>
</reference>
<sequence>MKSQACLKVCLALIGLVSIVSTAYIANDVVSDYAEVKELLAAFYRKHAKKYGHDYDPAAIQAIAENMDKSVKNDKTEATVNRKLWNEVFENDIILTLPQAESLLSESNSPRSRRQAHPDPRNFWPNLTISYEFYGGEETWRQLIRSAIRHVEQNVCFKFKENGGDRDGLRYYRGNGCWSNVGRVGGRQLVSIGYGCDSLGIVSHETLHALGLWHEQSRDDRDNFISIVADKITRGTEGNFAKRTAANSDNLGQPYDLGSVMHYGAKSFAYDWSSDTIKTRDWRYQNTIGQRDGLSFKDAKMINTRYCSNVCQRSLPCLNEGYTDPNNCGRCRCPSGYGGTYCETVEYTSCGGSLTASSSYKKIESGIVQPDANCVWRIRNPGGNVEVMFDQVNFQCADPCQSYVEVKYLSQKTSTGARLCCSLPSVIRSEGDDVIIILRGTPNTAVGWRGFTLKYRAIGGTPITPATVRPTYATTTRPYWTRTASGWIHIKNPPLYKPDGQIYTSDEQSAETKYSSEELYDPSTFLSPSSSSASPALLLPSDASPQRPSAQEHDLSQLSQNALTRPTPTTTVAPDTASWSAWGEWSACSQPCGGCGTKTRVRACYGGNQVCPGSNLDRESCNAHACAKPKKGMICNGRLLLPCDLLAKLNFGSNNYLNPKLKQSGFARSSTLPLPRISQRKPVFVNELEVHPPTERFLSSSTRRVKRQTANRFCEKRFIYQCPTALLTIQMEYKPDTQGTNDAYFQQYPECCSGYTPRRGVCYKN</sequence>